<gene>
    <name evidence="1" type="primary">ureB</name>
    <name type="ordered locus">Fjoh_4836</name>
</gene>
<keyword id="KW-0963">Cytoplasm</keyword>
<keyword id="KW-0378">Hydrolase</keyword>
<proteinExistence type="inferred from homology"/>
<name>URE2_FLAJ1</name>
<sequence length="122" mass="13738">MIPGEYFISKGDIECNVDRKTTKIKVINTGDRPIQVGSHCHFFEINRMMSFDRSEAFGMRLNIAAGTAVRFEPGEEKEVELVAFSGARRAFGINNIVNGDTTLEINKQHSLAKLKTENFKNK</sequence>
<evidence type="ECO:0000255" key="1">
    <source>
        <dbReference type="HAMAP-Rule" id="MF_01954"/>
    </source>
</evidence>
<comment type="catalytic activity">
    <reaction evidence="1">
        <text>urea + 2 H2O + H(+) = hydrogencarbonate + 2 NH4(+)</text>
        <dbReference type="Rhea" id="RHEA:20557"/>
        <dbReference type="ChEBI" id="CHEBI:15377"/>
        <dbReference type="ChEBI" id="CHEBI:15378"/>
        <dbReference type="ChEBI" id="CHEBI:16199"/>
        <dbReference type="ChEBI" id="CHEBI:17544"/>
        <dbReference type="ChEBI" id="CHEBI:28938"/>
        <dbReference type="EC" id="3.5.1.5"/>
    </reaction>
</comment>
<comment type="pathway">
    <text evidence="1">Nitrogen metabolism; urea degradation; CO(2) and NH(3) from urea (urease route): step 1/1.</text>
</comment>
<comment type="subunit">
    <text evidence="1">Heterotrimer of UreA (gamma), UreB (beta) and UreC (alpha) subunits. Three heterotrimers associate to form the active enzyme.</text>
</comment>
<comment type="subcellular location">
    <subcellularLocation>
        <location evidence="1">Cytoplasm</location>
    </subcellularLocation>
</comment>
<comment type="similarity">
    <text evidence="1">Belongs to the urease beta subunit family.</text>
</comment>
<feature type="chain" id="PRO_1000088505" description="Urease subunit beta">
    <location>
        <begin position="1"/>
        <end position="122"/>
    </location>
</feature>
<dbReference type="EC" id="3.5.1.5" evidence="1"/>
<dbReference type="EMBL" id="CP000685">
    <property type="protein sequence ID" value="ABQ07835.1"/>
    <property type="molecule type" value="Genomic_DNA"/>
</dbReference>
<dbReference type="RefSeq" id="WP_012026801.1">
    <property type="nucleotide sequence ID" value="NZ_MUGZ01000004.1"/>
</dbReference>
<dbReference type="SMR" id="A5FAD2"/>
<dbReference type="STRING" id="376686.Fjoh_4836"/>
<dbReference type="KEGG" id="fjo:Fjoh_4836"/>
<dbReference type="eggNOG" id="COG0832">
    <property type="taxonomic scope" value="Bacteria"/>
</dbReference>
<dbReference type="HOGENOM" id="CLU_129707_1_1_10"/>
<dbReference type="OrthoDB" id="9797217at2"/>
<dbReference type="UniPathway" id="UPA00258">
    <property type="reaction ID" value="UER00370"/>
</dbReference>
<dbReference type="Proteomes" id="UP000006694">
    <property type="component" value="Chromosome"/>
</dbReference>
<dbReference type="GO" id="GO:0035550">
    <property type="term" value="C:urease complex"/>
    <property type="evidence" value="ECO:0007669"/>
    <property type="project" value="InterPro"/>
</dbReference>
<dbReference type="GO" id="GO:0009039">
    <property type="term" value="F:urease activity"/>
    <property type="evidence" value="ECO:0007669"/>
    <property type="project" value="UniProtKB-UniRule"/>
</dbReference>
<dbReference type="GO" id="GO:0043419">
    <property type="term" value="P:urea catabolic process"/>
    <property type="evidence" value="ECO:0007669"/>
    <property type="project" value="UniProtKB-UniRule"/>
</dbReference>
<dbReference type="CDD" id="cd00407">
    <property type="entry name" value="Urease_beta"/>
    <property type="match status" value="1"/>
</dbReference>
<dbReference type="FunFam" id="2.10.150.10:FF:000001">
    <property type="entry name" value="Urease subunit beta"/>
    <property type="match status" value="1"/>
</dbReference>
<dbReference type="Gene3D" id="2.10.150.10">
    <property type="entry name" value="Urease, beta subunit"/>
    <property type="match status" value="1"/>
</dbReference>
<dbReference type="HAMAP" id="MF_01954">
    <property type="entry name" value="Urease_beta"/>
    <property type="match status" value="1"/>
</dbReference>
<dbReference type="InterPro" id="IPR002019">
    <property type="entry name" value="Urease_beta-like"/>
</dbReference>
<dbReference type="InterPro" id="IPR036461">
    <property type="entry name" value="Urease_betasu_sf"/>
</dbReference>
<dbReference type="InterPro" id="IPR050069">
    <property type="entry name" value="Urease_subunit"/>
</dbReference>
<dbReference type="NCBIfam" id="NF009682">
    <property type="entry name" value="PRK13203.1"/>
    <property type="match status" value="1"/>
</dbReference>
<dbReference type="NCBIfam" id="TIGR00192">
    <property type="entry name" value="urease_beta"/>
    <property type="match status" value="1"/>
</dbReference>
<dbReference type="PANTHER" id="PTHR33569">
    <property type="entry name" value="UREASE"/>
    <property type="match status" value="1"/>
</dbReference>
<dbReference type="PANTHER" id="PTHR33569:SF1">
    <property type="entry name" value="UREASE"/>
    <property type="match status" value="1"/>
</dbReference>
<dbReference type="Pfam" id="PF00699">
    <property type="entry name" value="Urease_beta"/>
    <property type="match status" value="1"/>
</dbReference>
<dbReference type="SUPFAM" id="SSF51278">
    <property type="entry name" value="Urease, beta-subunit"/>
    <property type="match status" value="1"/>
</dbReference>
<organism>
    <name type="scientific">Flavobacterium johnsoniae (strain ATCC 17061 / DSM 2064 / JCM 8514 / BCRC 14874 / CCUG 350202 / NBRC 14942 / NCIMB 11054 / UW101)</name>
    <name type="common">Cytophaga johnsonae</name>
    <dbReference type="NCBI Taxonomy" id="376686"/>
    <lineage>
        <taxon>Bacteria</taxon>
        <taxon>Pseudomonadati</taxon>
        <taxon>Bacteroidota</taxon>
        <taxon>Flavobacteriia</taxon>
        <taxon>Flavobacteriales</taxon>
        <taxon>Flavobacteriaceae</taxon>
        <taxon>Flavobacterium</taxon>
    </lineage>
</organism>
<protein>
    <recommendedName>
        <fullName evidence="1">Urease subunit beta</fullName>
        <ecNumber evidence="1">3.5.1.5</ecNumber>
    </recommendedName>
    <alternativeName>
        <fullName evidence="1">Urea amidohydrolase subunit beta</fullName>
    </alternativeName>
</protein>
<reference key="1">
    <citation type="journal article" date="2009" name="Appl. Environ. Microbiol.">
        <title>Novel features of the polysaccharide-digesting gliding bacterium Flavobacterium johnsoniae as revealed by genome sequence analysis.</title>
        <authorList>
            <person name="McBride M.J."/>
            <person name="Xie G."/>
            <person name="Martens E.C."/>
            <person name="Lapidus A."/>
            <person name="Henrissat B."/>
            <person name="Rhodes R.G."/>
            <person name="Goltsman E."/>
            <person name="Wang W."/>
            <person name="Xu J."/>
            <person name="Hunnicutt D.W."/>
            <person name="Staroscik A.M."/>
            <person name="Hoover T.R."/>
            <person name="Cheng Y.Q."/>
            <person name="Stein J.L."/>
        </authorList>
    </citation>
    <scope>NUCLEOTIDE SEQUENCE [LARGE SCALE GENOMIC DNA]</scope>
    <source>
        <strain>ATCC 17061 / DSM 2064 / JCM 8514 / BCRC 14874 / CCUG 350202 / NBRC 14942 / NCIMB 11054 / UW101</strain>
    </source>
</reference>
<accession>A5FAD2</accession>